<comment type="function">
    <text evidence="1">Cell division factor that enhances FtsZ-ring assembly. Directly interacts with FtsZ and promotes bundling of FtsZ protofilaments, with a reduction in FtsZ GTPase activity.</text>
</comment>
<comment type="subunit">
    <text evidence="1">Interacts with FtsZ.</text>
</comment>
<comment type="subcellular location">
    <subcellularLocation>
        <location evidence="1">Cytoplasm</location>
    </subcellularLocation>
    <text evidence="1">Localizes to mid-cell in an FtsZ-dependent manner.</text>
</comment>
<comment type="similarity">
    <text evidence="1">Belongs to the ZapD family.</text>
</comment>
<protein>
    <recommendedName>
        <fullName evidence="1">Cell division protein ZapD</fullName>
    </recommendedName>
    <alternativeName>
        <fullName evidence="1">Z ring-associated protein D</fullName>
    </alternativeName>
</protein>
<keyword id="KW-0131">Cell cycle</keyword>
<keyword id="KW-0132">Cell division</keyword>
<keyword id="KW-0963">Cytoplasm</keyword>
<keyword id="KW-1185">Reference proteome</keyword>
<keyword id="KW-0717">Septation</keyword>
<gene>
    <name evidence="1" type="primary">zapD</name>
    <name type="ordered locus">Rmet_3112</name>
</gene>
<evidence type="ECO:0000255" key="1">
    <source>
        <dbReference type="HAMAP-Rule" id="MF_01092"/>
    </source>
</evidence>
<dbReference type="EMBL" id="CP000352">
    <property type="protein sequence ID" value="ABF09984.1"/>
    <property type="molecule type" value="Genomic_DNA"/>
</dbReference>
<dbReference type="RefSeq" id="WP_008650332.1">
    <property type="nucleotide sequence ID" value="NC_007973.1"/>
</dbReference>
<dbReference type="SMR" id="Q1LIP2"/>
<dbReference type="STRING" id="266264.Rmet_3112"/>
<dbReference type="GeneID" id="60820512"/>
<dbReference type="KEGG" id="rme:Rmet_3112"/>
<dbReference type="eggNOG" id="COG4582">
    <property type="taxonomic scope" value="Bacteria"/>
</dbReference>
<dbReference type="HOGENOM" id="CLU_076303_0_1_4"/>
<dbReference type="Proteomes" id="UP000002429">
    <property type="component" value="Chromosome"/>
</dbReference>
<dbReference type="GO" id="GO:0032153">
    <property type="term" value="C:cell division site"/>
    <property type="evidence" value="ECO:0007669"/>
    <property type="project" value="TreeGrafter"/>
</dbReference>
<dbReference type="GO" id="GO:0005737">
    <property type="term" value="C:cytoplasm"/>
    <property type="evidence" value="ECO:0007669"/>
    <property type="project" value="UniProtKB-SubCell"/>
</dbReference>
<dbReference type="GO" id="GO:0000917">
    <property type="term" value="P:division septum assembly"/>
    <property type="evidence" value="ECO:0007669"/>
    <property type="project" value="UniProtKB-KW"/>
</dbReference>
<dbReference type="GO" id="GO:0043093">
    <property type="term" value="P:FtsZ-dependent cytokinesis"/>
    <property type="evidence" value="ECO:0007669"/>
    <property type="project" value="UniProtKB-UniRule"/>
</dbReference>
<dbReference type="Gene3D" id="1.10.3900.10">
    <property type="entry name" value="YacF-like"/>
    <property type="match status" value="1"/>
</dbReference>
<dbReference type="Gene3D" id="2.60.440.10">
    <property type="entry name" value="YacF-like domains"/>
    <property type="match status" value="1"/>
</dbReference>
<dbReference type="HAMAP" id="MF_01092">
    <property type="entry name" value="ZapD"/>
    <property type="match status" value="1"/>
</dbReference>
<dbReference type="InterPro" id="IPR009777">
    <property type="entry name" value="ZapD"/>
</dbReference>
<dbReference type="InterPro" id="IPR027462">
    <property type="entry name" value="ZapD_C"/>
</dbReference>
<dbReference type="InterPro" id="IPR036268">
    <property type="entry name" value="ZapD_sf"/>
</dbReference>
<dbReference type="NCBIfam" id="NF003656">
    <property type="entry name" value="PRK05287.1-4"/>
    <property type="match status" value="1"/>
</dbReference>
<dbReference type="PANTHER" id="PTHR39455">
    <property type="entry name" value="CELL DIVISION PROTEIN ZAPD"/>
    <property type="match status" value="1"/>
</dbReference>
<dbReference type="PANTHER" id="PTHR39455:SF1">
    <property type="entry name" value="CELL DIVISION PROTEIN ZAPD"/>
    <property type="match status" value="1"/>
</dbReference>
<dbReference type="Pfam" id="PF07072">
    <property type="entry name" value="ZapD"/>
    <property type="match status" value="1"/>
</dbReference>
<dbReference type="SUPFAM" id="SSF160950">
    <property type="entry name" value="YacF-like"/>
    <property type="match status" value="1"/>
</dbReference>
<feature type="chain" id="PRO_1000064918" description="Cell division protein ZapD">
    <location>
        <begin position="1"/>
        <end position="252"/>
    </location>
</feature>
<reference key="1">
    <citation type="journal article" date="2010" name="PLoS ONE">
        <title>The complete genome sequence of Cupriavidus metallidurans strain CH34, a master survivalist in harsh and anthropogenic environments.</title>
        <authorList>
            <person name="Janssen P.J."/>
            <person name="Van Houdt R."/>
            <person name="Moors H."/>
            <person name="Monsieurs P."/>
            <person name="Morin N."/>
            <person name="Michaux A."/>
            <person name="Benotmane M.A."/>
            <person name="Leys N."/>
            <person name="Vallaeys T."/>
            <person name="Lapidus A."/>
            <person name="Monchy S."/>
            <person name="Medigue C."/>
            <person name="Taghavi S."/>
            <person name="McCorkle S."/>
            <person name="Dunn J."/>
            <person name="van der Lelie D."/>
            <person name="Mergeay M."/>
        </authorList>
    </citation>
    <scope>NUCLEOTIDE SEQUENCE [LARGE SCALE GENOMIC DNA]</scope>
    <source>
        <strain>ATCC 43123 / DSM 2839 / NBRC 102507 / CH34</strain>
    </source>
</reference>
<organism>
    <name type="scientific">Cupriavidus metallidurans (strain ATCC 43123 / DSM 2839 / NBRC 102507 / CH34)</name>
    <name type="common">Ralstonia metallidurans</name>
    <dbReference type="NCBI Taxonomy" id="266264"/>
    <lineage>
        <taxon>Bacteria</taxon>
        <taxon>Pseudomonadati</taxon>
        <taxon>Pseudomonadota</taxon>
        <taxon>Betaproteobacteria</taxon>
        <taxon>Burkholderiales</taxon>
        <taxon>Burkholderiaceae</taxon>
        <taxon>Cupriavidus</taxon>
    </lineage>
</organism>
<name>ZAPD_CUPMC</name>
<proteinExistence type="inferred from homology"/>
<sequence length="252" mass="28743">MILYEYPFNERIRTLLRLEDLFDRLDYFLGQEHPLQHHVAITTIFEIIDVAGRADLKTDLIKELERQRQALAPLRSNPQIDQDALVAVITEIEQGIAALSQTVGKAGQLLADNEWLTSIRSRAIIPGGTCEFDLPAYYAWQHRDADDRRADILKWARPLASLRMGAGIVLRLLRESGQSGKVIATGGSYQQMLSGRSYQLMQVYLDESLLAFIPEMSANKYMLWVRFTQQDGDMRPRSVDADIPFLLKLCNF</sequence>
<accession>Q1LIP2</accession>